<name>ACEK_XANE5</name>
<comment type="function">
    <text evidence="1">Bifunctional enzyme which can phosphorylate or dephosphorylate isocitrate dehydrogenase (IDH) on a specific serine residue. This is a regulatory mechanism which enables bacteria to bypass the Krebs cycle via the glyoxylate shunt in response to the source of carbon. When bacteria are grown on glucose, IDH is fully active and unphosphorylated, but when grown on acetate or ethanol, the activity of IDH declines drastically concomitant with its phosphorylation.</text>
</comment>
<comment type="catalytic activity">
    <reaction evidence="1">
        <text>L-seryl-[isocitrate dehydrogenase] + ATP = O-phospho-L-seryl-[isocitrate dehydrogenase] + ADP + H(+)</text>
        <dbReference type="Rhea" id="RHEA:43540"/>
        <dbReference type="Rhea" id="RHEA-COMP:10605"/>
        <dbReference type="Rhea" id="RHEA-COMP:10606"/>
        <dbReference type="ChEBI" id="CHEBI:15378"/>
        <dbReference type="ChEBI" id="CHEBI:29999"/>
        <dbReference type="ChEBI" id="CHEBI:30616"/>
        <dbReference type="ChEBI" id="CHEBI:83421"/>
        <dbReference type="ChEBI" id="CHEBI:456216"/>
        <dbReference type="EC" id="2.7.11.5"/>
    </reaction>
</comment>
<comment type="subcellular location">
    <subcellularLocation>
        <location evidence="1">Cytoplasm</location>
    </subcellularLocation>
</comment>
<comment type="similarity">
    <text evidence="1">Belongs to the AceK family.</text>
</comment>
<feature type="chain" id="PRO_0000259160" description="Isocitrate dehydrogenase kinase/phosphatase">
    <location>
        <begin position="1"/>
        <end position="579"/>
    </location>
</feature>
<feature type="active site" evidence="1">
    <location>
        <position position="380"/>
    </location>
</feature>
<feature type="binding site" evidence="1">
    <location>
        <begin position="324"/>
        <end position="330"/>
    </location>
    <ligand>
        <name>ATP</name>
        <dbReference type="ChEBI" id="CHEBI:30616"/>
    </ligand>
</feature>
<feature type="binding site" evidence="1">
    <location>
        <position position="345"/>
    </location>
    <ligand>
        <name>ATP</name>
        <dbReference type="ChEBI" id="CHEBI:30616"/>
    </ligand>
</feature>
<sequence length="579" mass="66815">MSHPPLPPQSERRALAIAQAVYEAFEDYHARFSEITARAKQRFETRDWSGAREDAVARIALYDQYIAECMLRLRAVLLGQAHDRALWMRARDHYAALLSGLIDQELYKTFYNTLTRRYFGTHGVDADIEFIALDIEPTDAITVPVARHTYAVSPGRLTDMLVRVLGDYAFAVPYTHRTRCAAAIAVRLLDDLAHWGEHPVRSVELLETVFYRERRAYLVGRVFGEHRFSPCVIALINDEAGLRAEAVLTRRSDVAQLFSNSRSYFQADLSTVGDAVVFLRSLLTHKPVDELYTMLGRAKQGKTERYRTFFSHFQAHPSEQLVHADGTPGMVMVVFTLPSYPLVFKLIRDRFAYPKTMSRAQVEGKYELVFQLDRIGRLLDAQPYRFLRFPKARFSPALLQELQTSCAMSLSEDGDDVLIALCYVQRRLRPLNLYLREQLPEAAHAAALDYGQAIKDMARNNIFPGDMLLKNFGITRHQRAVFYDYDELCLITECNFRDWPVPTTYEEQMAAEPWFHVGPRDVFPERFALFMGLPASQLEAVKHQHPELFDPRWWRDLQSRLREDDYPDTPPYAESRRLA</sequence>
<evidence type="ECO:0000255" key="1">
    <source>
        <dbReference type="HAMAP-Rule" id="MF_00747"/>
    </source>
</evidence>
<keyword id="KW-0067">ATP-binding</keyword>
<keyword id="KW-0963">Cytoplasm</keyword>
<keyword id="KW-0329">Glyoxylate bypass</keyword>
<keyword id="KW-0378">Hydrolase</keyword>
<keyword id="KW-0418">Kinase</keyword>
<keyword id="KW-0547">Nucleotide-binding</keyword>
<keyword id="KW-0904">Protein phosphatase</keyword>
<keyword id="KW-0723">Serine/threonine-protein kinase</keyword>
<keyword id="KW-0808">Transferase</keyword>
<keyword id="KW-0816">Tricarboxylic acid cycle</keyword>
<accession>Q3BNH4</accession>
<protein>
    <recommendedName>
        <fullName evidence="1">Isocitrate dehydrogenase kinase/phosphatase</fullName>
        <shortName evidence="1">IDH kinase/phosphatase</shortName>
        <shortName evidence="1">IDHK/P</shortName>
        <ecNumber evidence="1">2.7.11.5</ecNumber>
        <ecNumber evidence="1">3.1.3.-</ecNumber>
    </recommendedName>
</protein>
<proteinExistence type="inferred from homology"/>
<organism>
    <name type="scientific">Xanthomonas euvesicatoria pv. vesicatoria (strain 85-10)</name>
    <name type="common">Xanthomonas campestris pv. vesicatoria</name>
    <dbReference type="NCBI Taxonomy" id="316273"/>
    <lineage>
        <taxon>Bacteria</taxon>
        <taxon>Pseudomonadati</taxon>
        <taxon>Pseudomonadota</taxon>
        <taxon>Gammaproteobacteria</taxon>
        <taxon>Lysobacterales</taxon>
        <taxon>Lysobacteraceae</taxon>
        <taxon>Xanthomonas</taxon>
    </lineage>
</organism>
<dbReference type="EC" id="2.7.11.5" evidence="1"/>
<dbReference type="EC" id="3.1.3.-" evidence="1"/>
<dbReference type="EMBL" id="AM039952">
    <property type="protein sequence ID" value="CAJ25689.1"/>
    <property type="molecule type" value="Genomic_DNA"/>
</dbReference>
<dbReference type="RefSeq" id="WP_011348808.1">
    <property type="nucleotide sequence ID" value="NZ_CP017190.1"/>
</dbReference>
<dbReference type="SMR" id="Q3BNH4"/>
<dbReference type="STRING" id="456327.BJD11_02845"/>
<dbReference type="KEGG" id="xcv:XCV3958"/>
<dbReference type="eggNOG" id="COG4579">
    <property type="taxonomic scope" value="Bacteria"/>
</dbReference>
<dbReference type="HOGENOM" id="CLU_033804_1_1_6"/>
<dbReference type="Proteomes" id="UP000007069">
    <property type="component" value="Chromosome"/>
</dbReference>
<dbReference type="GO" id="GO:0005737">
    <property type="term" value="C:cytoplasm"/>
    <property type="evidence" value="ECO:0007669"/>
    <property type="project" value="UniProtKB-SubCell"/>
</dbReference>
<dbReference type="GO" id="GO:0008772">
    <property type="term" value="F:[isocitrate dehydrogenase (NADP+)] kinase activity"/>
    <property type="evidence" value="ECO:0007669"/>
    <property type="project" value="UniProtKB-UniRule"/>
</dbReference>
<dbReference type="GO" id="GO:0016208">
    <property type="term" value="F:AMP binding"/>
    <property type="evidence" value="ECO:0007669"/>
    <property type="project" value="TreeGrafter"/>
</dbReference>
<dbReference type="GO" id="GO:0005524">
    <property type="term" value="F:ATP binding"/>
    <property type="evidence" value="ECO:0007669"/>
    <property type="project" value="UniProtKB-UniRule"/>
</dbReference>
<dbReference type="GO" id="GO:0004721">
    <property type="term" value="F:phosphoprotein phosphatase activity"/>
    <property type="evidence" value="ECO:0007669"/>
    <property type="project" value="UniProtKB-KW"/>
</dbReference>
<dbReference type="GO" id="GO:0004674">
    <property type="term" value="F:protein serine/threonine kinase activity"/>
    <property type="evidence" value="ECO:0007669"/>
    <property type="project" value="UniProtKB-KW"/>
</dbReference>
<dbReference type="GO" id="GO:0006006">
    <property type="term" value="P:glucose metabolic process"/>
    <property type="evidence" value="ECO:0007669"/>
    <property type="project" value="InterPro"/>
</dbReference>
<dbReference type="GO" id="GO:0006097">
    <property type="term" value="P:glyoxylate cycle"/>
    <property type="evidence" value="ECO:0007669"/>
    <property type="project" value="UniProtKB-UniRule"/>
</dbReference>
<dbReference type="GO" id="GO:0006099">
    <property type="term" value="P:tricarboxylic acid cycle"/>
    <property type="evidence" value="ECO:0007669"/>
    <property type="project" value="UniProtKB-UniRule"/>
</dbReference>
<dbReference type="HAMAP" id="MF_00747">
    <property type="entry name" value="AceK"/>
    <property type="match status" value="1"/>
</dbReference>
<dbReference type="InterPro" id="IPR046855">
    <property type="entry name" value="AceK_kinase"/>
</dbReference>
<dbReference type="InterPro" id="IPR046854">
    <property type="entry name" value="AceK_regulatory"/>
</dbReference>
<dbReference type="InterPro" id="IPR010452">
    <property type="entry name" value="Isocitrate_DH_AceK"/>
</dbReference>
<dbReference type="NCBIfam" id="NF002804">
    <property type="entry name" value="PRK02946.1"/>
    <property type="match status" value="1"/>
</dbReference>
<dbReference type="PANTHER" id="PTHR39559">
    <property type="match status" value="1"/>
</dbReference>
<dbReference type="PANTHER" id="PTHR39559:SF1">
    <property type="entry name" value="ISOCITRATE DEHYDROGENASE KINASE_PHOSPHATASE"/>
    <property type="match status" value="1"/>
</dbReference>
<dbReference type="Pfam" id="PF06315">
    <property type="entry name" value="AceK_kinase"/>
    <property type="match status" value="1"/>
</dbReference>
<dbReference type="Pfam" id="PF20423">
    <property type="entry name" value="AceK_regulatory"/>
    <property type="match status" value="1"/>
</dbReference>
<dbReference type="PIRSF" id="PIRSF000719">
    <property type="entry name" value="AceK"/>
    <property type="match status" value="1"/>
</dbReference>
<gene>
    <name evidence="1" type="primary">aceK</name>
    <name type="ordered locus">XCV3958</name>
</gene>
<reference key="1">
    <citation type="journal article" date="2005" name="J. Bacteriol.">
        <title>Insights into genome plasticity and pathogenicity of the plant pathogenic Bacterium Xanthomonas campestris pv. vesicatoria revealed by the complete genome sequence.</title>
        <authorList>
            <person name="Thieme F."/>
            <person name="Koebnik R."/>
            <person name="Bekel T."/>
            <person name="Berger C."/>
            <person name="Boch J."/>
            <person name="Buettner D."/>
            <person name="Caldana C."/>
            <person name="Gaigalat L."/>
            <person name="Goesmann A."/>
            <person name="Kay S."/>
            <person name="Kirchner O."/>
            <person name="Lanz C."/>
            <person name="Linke B."/>
            <person name="McHardy A.C."/>
            <person name="Meyer F."/>
            <person name="Mittenhuber G."/>
            <person name="Nies D.H."/>
            <person name="Niesbach-Kloesgen U."/>
            <person name="Patschkowski T."/>
            <person name="Rueckert C."/>
            <person name="Rupp O."/>
            <person name="Schneiker S."/>
            <person name="Schuster S.C."/>
            <person name="Vorhoelter F.J."/>
            <person name="Weber E."/>
            <person name="Puehler A."/>
            <person name="Bonas U."/>
            <person name="Bartels D."/>
            <person name="Kaiser O."/>
        </authorList>
    </citation>
    <scope>NUCLEOTIDE SEQUENCE [LARGE SCALE GENOMIC DNA]</scope>
    <source>
        <strain>85-10</strain>
    </source>
</reference>